<name>P2XA_DICDI</name>
<reference key="1">
    <citation type="journal article" date="2007" name="Nature">
        <title>An intracellular P2X receptor required for osmoregulation in Dictyostelium discoideum.</title>
        <authorList>
            <person name="Fountain S.J."/>
            <person name="Parkinson K."/>
            <person name="Young M.T."/>
            <person name="Cao L."/>
            <person name="Thompson C.R.L."/>
            <person name="North R.A."/>
        </authorList>
    </citation>
    <scope>NUCLEOTIDE SEQUENCE [MRNA]</scope>
    <scope>FUNCTION</scope>
    <scope>SUBCELLULAR LOCATION</scope>
    <scope>ACTIVITY REGULATION</scope>
    <scope>DISRUPTION PHENOTYPE</scope>
    <scope>MUTAGENESIS OF LYS-67; LYS-289 AND ASP-330</scope>
</reference>
<reference key="2">
    <citation type="journal article" date="2002" name="Nature">
        <title>Sequence and analysis of chromosome 2 of Dictyostelium discoideum.</title>
        <authorList>
            <person name="Gloeckner G."/>
            <person name="Eichinger L."/>
            <person name="Szafranski K."/>
            <person name="Pachebat J.A."/>
            <person name="Bankier A.T."/>
            <person name="Dear P.H."/>
            <person name="Lehmann R."/>
            <person name="Baumgart C."/>
            <person name="Parra G."/>
            <person name="Abril J.F."/>
            <person name="Guigo R."/>
            <person name="Kumpf K."/>
            <person name="Tunggal B."/>
            <person name="Cox E.C."/>
            <person name="Quail M.A."/>
            <person name="Platzer M."/>
            <person name="Rosenthal A."/>
            <person name="Noegel A.A."/>
        </authorList>
    </citation>
    <scope>NUCLEOTIDE SEQUENCE [LARGE SCALE GENOMIC DNA]</scope>
    <source>
        <strain>AX4</strain>
    </source>
</reference>
<reference key="3">
    <citation type="journal article" date="2005" name="Nature">
        <title>The genome of the social amoeba Dictyostelium discoideum.</title>
        <authorList>
            <person name="Eichinger L."/>
            <person name="Pachebat J.A."/>
            <person name="Gloeckner G."/>
            <person name="Rajandream M.A."/>
            <person name="Sucgang R."/>
            <person name="Berriman M."/>
            <person name="Song J."/>
            <person name="Olsen R."/>
            <person name="Szafranski K."/>
            <person name="Xu Q."/>
            <person name="Tunggal B."/>
            <person name="Kummerfeld S."/>
            <person name="Madera M."/>
            <person name="Konfortov B.A."/>
            <person name="Rivero F."/>
            <person name="Bankier A.T."/>
            <person name="Lehmann R."/>
            <person name="Hamlin N."/>
            <person name="Davies R."/>
            <person name="Gaudet P."/>
            <person name="Fey P."/>
            <person name="Pilcher K."/>
            <person name="Chen G."/>
            <person name="Saunders D."/>
            <person name="Sodergren E.J."/>
            <person name="Davis P."/>
            <person name="Kerhornou A."/>
            <person name="Nie X."/>
            <person name="Hall N."/>
            <person name="Anjard C."/>
            <person name="Hemphill L."/>
            <person name="Bason N."/>
            <person name="Farbrother P."/>
            <person name="Desany B."/>
            <person name="Just E."/>
            <person name="Morio T."/>
            <person name="Rost R."/>
            <person name="Churcher C.M."/>
            <person name="Cooper J."/>
            <person name="Haydock S."/>
            <person name="van Driessche N."/>
            <person name="Cronin A."/>
            <person name="Goodhead I."/>
            <person name="Muzny D.M."/>
            <person name="Mourier T."/>
            <person name="Pain A."/>
            <person name="Lu M."/>
            <person name="Harper D."/>
            <person name="Lindsay R."/>
            <person name="Hauser H."/>
            <person name="James K.D."/>
            <person name="Quiles M."/>
            <person name="Madan Babu M."/>
            <person name="Saito T."/>
            <person name="Buchrieser C."/>
            <person name="Wardroper A."/>
            <person name="Felder M."/>
            <person name="Thangavelu M."/>
            <person name="Johnson D."/>
            <person name="Knights A."/>
            <person name="Loulseged H."/>
            <person name="Mungall K.L."/>
            <person name="Oliver K."/>
            <person name="Price C."/>
            <person name="Quail M.A."/>
            <person name="Urushihara H."/>
            <person name="Hernandez J."/>
            <person name="Rabbinowitsch E."/>
            <person name="Steffen D."/>
            <person name="Sanders M."/>
            <person name="Ma J."/>
            <person name="Kohara Y."/>
            <person name="Sharp S."/>
            <person name="Simmonds M.N."/>
            <person name="Spiegler S."/>
            <person name="Tivey A."/>
            <person name="Sugano S."/>
            <person name="White B."/>
            <person name="Walker D."/>
            <person name="Woodward J.R."/>
            <person name="Winckler T."/>
            <person name="Tanaka Y."/>
            <person name="Shaulsky G."/>
            <person name="Schleicher M."/>
            <person name="Weinstock G.M."/>
            <person name="Rosenthal A."/>
            <person name="Cox E.C."/>
            <person name="Chisholm R.L."/>
            <person name="Gibbs R.A."/>
            <person name="Loomis W.F."/>
            <person name="Platzer M."/>
            <person name="Kay R.R."/>
            <person name="Williams J.G."/>
            <person name="Dear P.H."/>
            <person name="Noegel A.A."/>
            <person name="Barrell B.G."/>
            <person name="Kuspa A."/>
        </authorList>
    </citation>
    <scope>NUCLEOTIDE SEQUENCE [LARGE SCALE GENOMIC DNA]</scope>
    <source>
        <strain>AX4</strain>
    </source>
</reference>
<reference key="4">
    <citation type="journal article" date="2008" name="Cell Calcium">
        <title>Purinergic-mediated Ca2+ influx in Dictyostelium discoideum.</title>
        <authorList>
            <person name="Ludlow M.J."/>
            <person name="Traynor D."/>
            <person name="Fisher P.R."/>
            <person name="Ennion S.J."/>
        </authorList>
    </citation>
    <scope>FUNCTION</scope>
    <scope>DISRUPTION PHENOTYPE</scope>
</reference>
<reference key="5">
    <citation type="journal article" date="2009" name="J. Biol. Chem.">
        <title>Functional characterization of intracellular Dictyostelium discoideum P2X receptors.</title>
        <authorList>
            <person name="Ludlow M.J."/>
            <person name="Durai L."/>
            <person name="Ennion S.J."/>
        </authorList>
    </citation>
    <scope>FUNCTION</scope>
    <scope>SUBCELLULAR LOCATION</scope>
    <scope>DISRUPTION PHENOTYPE</scope>
</reference>
<keyword id="KW-0407">Ion channel</keyword>
<keyword id="KW-0406">Ion transport</keyword>
<keyword id="KW-1071">Ligand-gated ion channel</keyword>
<keyword id="KW-0472">Membrane</keyword>
<keyword id="KW-0675">Receptor</keyword>
<keyword id="KW-1185">Reference proteome</keyword>
<keyword id="KW-0812">Transmembrane</keyword>
<keyword id="KW-1133">Transmembrane helix</keyword>
<keyword id="KW-0813">Transport</keyword>
<keyword id="KW-0926">Vacuole</keyword>
<proteinExistence type="evidence at protein level"/>
<protein>
    <recommendedName>
        <fullName>P2X receptor A</fullName>
        <shortName>DdP2X</shortName>
        <shortName>P2XA</shortName>
    </recommendedName>
</protein>
<gene>
    <name type="primary">p2xA</name>
    <name type="ORF">DDB_G0272004</name>
</gene>
<dbReference type="EMBL" id="EU047552">
    <property type="protein sequence ID" value="ABS88293.1"/>
    <property type="molecule type" value="mRNA"/>
</dbReference>
<dbReference type="EMBL" id="AAFI02000007">
    <property type="protein sequence ID" value="EAL71436.1"/>
    <property type="molecule type" value="Genomic_DNA"/>
</dbReference>
<dbReference type="RefSeq" id="XP_645378.1">
    <property type="nucleotide sequence ID" value="XM_640286.1"/>
</dbReference>
<dbReference type="FunCoup" id="Q86JM7">
    <property type="interactions" value="6"/>
</dbReference>
<dbReference type="STRING" id="44689.Q86JM7"/>
<dbReference type="TCDB" id="1.A.7.2.1">
    <property type="family name" value="the atp-gated p2x receptor cation channel (p2x receptor) family"/>
</dbReference>
<dbReference type="PaxDb" id="44689-DDB0238349"/>
<dbReference type="EnsemblProtists" id="EAL71436">
    <property type="protein sequence ID" value="EAL71436"/>
    <property type="gene ID" value="DDB_G0272004"/>
</dbReference>
<dbReference type="GeneID" id="8618267"/>
<dbReference type="KEGG" id="ddi:DDB_G0272004"/>
<dbReference type="dictyBase" id="DDB_G0272004">
    <property type="gene designation" value="p2xA"/>
</dbReference>
<dbReference type="VEuPathDB" id="AmoebaDB:DDB_G0272004"/>
<dbReference type="eggNOG" id="ENOG502RE1D">
    <property type="taxonomic scope" value="Eukaryota"/>
</dbReference>
<dbReference type="HOGENOM" id="CLU_060033_0_0_1"/>
<dbReference type="InParanoid" id="Q86JM7"/>
<dbReference type="OMA" id="NNCVPGY"/>
<dbReference type="PhylomeDB" id="Q86JM7"/>
<dbReference type="Reactome" id="R-DDI-139853">
    <property type="pathway name" value="Elevation of cytosolic Ca2+ levels"/>
</dbReference>
<dbReference type="Reactome" id="R-DDI-418346">
    <property type="pathway name" value="Platelet homeostasis"/>
</dbReference>
<dbReference type="Reactome" id="R-DDI-6798695">
    <property type="pathway name" value="Neutrophil degranulation"/>
</dbReference>
<dbReference type="Reactome" id="R-DDI-844456">
    <property type="pathway name" value="The NLRP3 inflammasome"/>
</dbReference>
<dbReference type="PRO" id="PR:Q86JM7"/>
<dbReference type="Proteomes" id="UP000002195">
    <property type="component" value="Chromosome 2"/>
</dbReference>
<dbReference type="GO" id="GO:0031164">
    <property type="term" value="C:contractile vacuolar membrane"/>
    <property type="evidence" value="ECO:0000314"/>
    <property type="project" value="dictyBase"/>
</dbReference>
<dbReference type="GO" id="GO:0005524">
    <property type="term" value="F:ATP binding"/>
    <property type="evidence" value="ECO:0000314"/>
    <property type="project" value="dictyBase"/>
</dbReference>
<dbReference type="GO" id="GO:0035381">
    <property type="term" value="F:ATP-gated ion channel activity"/>
    <property type="evidence" value="ECO:0000318"/>
    <property type="project" value="GO_Central"/>
</dbReference>
<dbReference type="GO" id="GO:0005095">
    <property type="term" value="F:GTPase inhibitor activity"/>
    <property type="evidence" value="ECO:0000314"/>
    <property type="project" value="dictyBase"/>
</dbReference>
<dbReference type="GO" id="GO:0140417">
    <property type="term" value="F:intracellularly ATP-gated calcium channel activity"/>
    <property type="evidence" value="ECO:0000315"/>
    <property type="project" value="dictyBase"/>
</dbReference>
<dbReference type="GO" id="GO:0015276">
    <property type="term" value="F:ligand-gated monoatomic ion channel activity"/>
    <property type="evidence" value="ECO:0000314"/>
    <property type="project" value="dictyBase"/>
</dbReference>
<dbReference type="GO" id="GO:0031267">
    <property type="term" value="F:small GTPase binding"/>
    <property type="evidence" value="ECO:0000353"/>
    <property type="project" value="dictyBase"/>
</dbReference>
<dbReference type="GO" id="GO:0070588">
    <property type="term" value="P:calcium ion transmembrane transport"/>
    <property type="evidence" value="ECO:0000315"/>
    <property type="project" value="dictyBase"/>
</dbReference>
<dbReference type="GO" id="GO:0071476">
    <property type="term" value="P:cellular hypotonic response"/>
    <property type="evidence" value="ECO:0000316"/>
    <property type="project" value="dictyBase"/>
</dbReference>
<dbReference type="GO" id="GO:0070177">
    <property type="term" value="P:contractile vacuole discharge"/>
    <property type="evidence" value="ECO:0000315"/>
    <property type="project" value="dictyBase"/>
</dbReference>
<dbReference type="GO" id="GO:0140025">
    <property type="term" value="P:contractile vacuole tethering involved in discharge"/>
    <property type="evidence" value="ECO:0000315"/>
    <property type="project" value="dictyBase"/>
</dbReference>
<dbReference type="GO" id="GO:0006971">
    <property type="term" value="P:hypotonic response"/>
    <property type="evidence" value="ECO:0000315"/>
    <property type="project" value="dictyBase"/>
</dbReference>
<dbReference type="GO" id="GO:0009992">
    <property type="term" value="P:intracellular water homeostasis"/>
    <property type="evidence" value="ECO:0000315"/>
    <property type="project" value="dictyBase"/>
</dbReference>
<dbReference type="GO" id="GO:0006811">
    <property type="term" value="P:monoatomic ion transport"/>
    <property type="evidence" value="ECO:0000314"/>
    <property type="project" value="dictyBase"/>
</dbReference>
<dbReference type="GO" id="GO:0031340">
    <property type="term" value="P:positive regulation of vesicle fusion"/>
    <property type="evidence" value="ECO:0000314"/>
    <property type="project" value="dictyBase"/>
</dbReference>
<dbReference type="GO" id="GO:0035590">
    <property type="term" value="P:purinergic nucleotide receptor signaling pathway"/>
    <property type="evidence" value="ECO:0000315"/>
    <property type="project" value="dictyBase"/>
</dbReference>
<dbReference type="GO" id="GO:0050848">
    <property type="term" value="P:regulation of calcium-mediated signaling"/>
    <property type="evidence" value="ECO:0000316"/>
    <property type="project" value="dictyBase"/>
</dbReference>
<dbReference type="FunFam" id="1.10.287.940:FF:000012">
    <property type="entry name" value="P2X receptor A"/>
    <property type="match status" value="1"/>
</dbReference>
<dbReference type="FunFam" id="1.10.287.940:FF:000010">
    <property type="entry name" value="P2X receptor E"/>
    <property type="match status" value="1"/>
</dbReference>
<dbReference type="Gene3D" id="1.10.287.940">
    <property type="entry name" value="atp-gated p2x4 ion channel"/>
    <property type="match status" value="2"/>
</dbReference>
<dbReference type="PANTHER" id="PTHR10125">
    <property type="entry name" value="P2X PURINOCEPTOR"/>
    <property type="match status" value="1"/>
</dbReference>
<dbReference type="PANTHER" id="PTHR10125:SF27">
    <property type="entry name" value="P2X RECEPTOR A-RELATED"/>
    <property type="match status" value="1"/>
</dbReference>
<dbReference type="Pfam" id="PF00864">
    <property type="entry name" value="P2X_receptor"/>
    <property type="match status" value="2"/>
</dbReference>
<comment type="function">
    <text evidence="2 3 4">P2X receptors are ATP-gated ion channels that play a role in intracellular calcium signaling. Not required for the purinergic response to extracellular nucleotides. Inward currents evoked by intracellular ATP and ATP analogs. Exclusively selective for ATP over other nucleotides. Insensitive to P2 receptor antagonists PPADS, suramin and 2',3'-O-(2,4,6-trinitrophenyl)-ATP but inhibited by nanomolar concentrations of copper and sodium ion. More permeable to ammonium than either sodium or potassium ions and less permeable to choline. It has been reported that p2xA is not essential for osmoregulation (PubMed:19833731), however this information is in contradiction with another source (PubMed:17625565) which indicates that p2xA is required for osmoregulation. Found to be permeable to chloride ions. Inhibited by copper and sodium ions.</text>
</comment>
<comment type="subcellular location">
    <subcellularLocation>
        <location evidence="2 4">Contractile vacuole membrane</location>
    </subcellularLocation>
    <text>Ligand binding domain within the lumen of the vacuole.</text>
</comment>
<comment type="disruption phenotype">
    <text evidence="2 3 4">Response to extracellular ATP remains the same in p2xA null strains. p2xA null cells have been reported to have compromised contractile vacuoles and defective osmoregulation, and exhibit cell swelling (PubMed:17625565). This is contradictory to other reports (PubMed:19833731). Quintuple p2xA/p2xB/p2XC/p2xd/p2xE null cells exhibit a slight delay in their osmoregulatory response, but are ultimately still capable of regulating their cell volume in water. Extracellular purinergic response to ATP persists in the quintuple null cells with no alteration in the kinetics of the response, but the magnitude of the response is lower. Responses to the calmodulin antagonist calmidazolium are reduced and intracellular calcium signaling is disrupted in quintuple null cells. The presence of copper prevents both wild type and quintuple null cells from undergoing an osmoregulatory decrease in cell volume. The quintuple null strains grow slightly slower than wild type in shaking axenic cultures.</text>
</comment>
<comment type="similarity">
    <text evidence="5">Belongs to the P2X receptor family.</text>
</comment>
<feature type="chain" id="PRO_0000390408" description="P2X receptor A">
    <location>
        <begin position="1"/>
        <end position="378"/>
    </location>
</feature>
<feature type="topological domain" description="Cytoplasmic" evidence="1">
    <location>
        <begin position="1"/>
        <end position="27"/>
    </location>
</feature>
<feature type="transmembrane region" description="Helical" evidence="1">
    <location>
        <begin position="28"/>
        <end position="48"/>
    </location>
</feature>
<feature type="topological domain" description="Lumenal" evidence="1">
    <location>
        <begin position="49"/>
        <end position="307"/>
    </location>
</feature>
<feature type="transmembrane region" description="Helical" evidence="1">
    <location>
        <begin position="308"/>
        <end position="328"/>
    </location>
</feature>
<feature type="topological domain" description="Cytoplasmic" evidence="1">
    <location>
        <begin position="329"/>
        <end position="378"/>
    </location>
</feature>
<feature type="region of interest" description="Pore-forming motif" evidence="1">
    <location>
        <begin position="290"/>
        <end position="303"/>
    </location>
</feature>
<feature type="mutagenesis site" description="More than ten-fold decrease in ATP sensitivity." evidence="2">
    <original>K</original>
    <variation>A</variation>
    <location>
        <position position="67"/>
    </location>
</feature>
<feature type="mutagenesis site" description="ATP elicits smaller currents." evidence="2">
    <original>K</original>
    <variation>A</variation>
    <location>
        <position position="289"/>
    </location>
</feature>
<feature type="mutagenesis site" description="Loss of function." evidence="2">
    <original>D</original>
    <variation>A</variation>
    <location>
        <position position="330"/>
    </location>
</feature>
<evidence type="ECO:0000255" key="1"/>
<evidence type="ECO:0000269" key="2">
    <source>
    </source>
</evidence>
<evidence type="ECO:0000269" key="3">
    <source>
    </source>
</evidence>
<evidence type="ECO:0000269" key="4">
    <source>
    </source>
</evidence>
<evidence type="ECO:0000305" key="5"/>
<sequence>MGFSFDWDDIFQYSTVKIVRIRDRRLGILHLSFLVGIVAYIVVYSAIIKKGYLFTEVPIGSVRTSLKGPNTFASNLTYCSNQQHNGSTYPFTPLECNYWDEQLALFPVGQDSTFTCTTRVRLSKQEANCNFTDPTCKFVDEPGSAKNIYIADIESFTILIDHTMYASSSGSQFNAVDLHGYILNQDGDEVQIDANGTSIGVSGKPDIMTIGQLLSFGGVSLDQASPVDSNVSIRYDGVVLFVFITYSNTYTYSTSDFKYVYSVQQIANTIYDVPETIILESIHSRLLYKRHGIRVIFIQTGTIGSFHFQTLLLTLVSGLGLLAVATTVVDQLAIRLLPQRKSYSSLKFQVTESMSNPMKKRITTDEGEDVLYTRIEGL</sequence>
<organism>
    <name type="scientific">Dictyostelium discoideum</name>
    <name type="common">Social amoeba</name>
    <dbReference type="NCBI Taxonomy" id="44689"/>
    <lineage>
        <taxon>Eukaryota</taxon>
        <taxon>Amoebozoa</taxon>
        <taxon>Evosea</taxon>
        <taxon>Eumycetozoa</taxon>
        <taxon>Dictyostelia</taxon>
        <taxon>Dictyosteliales</taxon>
        <taxon>Dictyosteliaceae</taxon>
        <taxon>Dictyostelium</taxon>
    </lineage>
</organism>
<accession>Q86JM7</accession>
<accession>Q55A88</accession>